<keyword id="KW-0002">3D-structure</keyword>
<keyword id="KW-0025">Alternative splicing</keyword>
<keyword id="KW-0067">ATP-binding</keyword>
<keyword id="KW-0963">Cytoplasm</keyword>
<keyword id="KW-0238">DNA-binding</keyword>
<keyword id="KW-0433">Leucine-rich repeat</keyword>
<keyword id="KW-0547">Nucleotide-binding</keyword>
<keyword id="KW-0539">Nucleus</keyword>
<keyword id="KW-0611">Plant defense</keyword>
<keyword id="KW-1185">Reference proteome</keyword>
<keyword id="KW-0677">Repeat</keyword>
<keyword id="KW-0804">Transcription</keyword>
<keyword id="KW-0805">Transcription regulation</keyword>
<gene>
    <name evidence="13" type="primary">RRS1</name>
    <name evidence="15" type="synonym">RCH2</name>
    <name evidence="13" type="synonym">RRS1-S</name>
    <name evidence="12" type="synonym">RSH4</name>
    <name type="synonym">SLH1</name>
    <name type="synonym">WRKY52</name>
    <name type="ordered locus">At5g45260/At5g45270</name>
    <name type="ORF">K9E15.2/K9E15.3</name>
</gene>
<organism>
    <name type="scientific">Arabidopsis thaliana</name>
    <name type="common">Mouse-ear cress</name>
    <dbReference type="NCBI Taxonomy" id="3702"/>
    <lineage>
        <taxon>Eukaryota</taxon>
        <taxon>Viridiplantae</taxon>
        <taxon>Streptophyta</taxon>
        <taxon>Embryophyta</taxon>
        <taxon>Tracheophyta</taxon>
        <taxon>Spermatophyta</taxon>
        <taxon>Magnoliopsida</taxon>
        <taxon>eudicotyledons</taxon>
        <taxon>Gunneridae</taxon>
        <taxon>Pentapetalae</taxon>
        <taxon>rosids</taxon>
        <taxon>malvids</taxon>
        <taxon>Brassicales</taxon>
        <taxon>Brassicaceae</taxon>
        <taxon>Camelineae</taxon>
        <taxon>Arabidopsis</taxon>
    </lineage>
</organism>
<protein>
    <recommendedName>
        <fullName evidence="13">Disease resistance protein RRS1</fullName>
    </recommendedName>
    <alternativeName>
        <fullName evidence="15">Disease resistance protein RCH2</fullName>
    </alternativeName>
    <alternativeName>
        <fullName>Disease resistance protein SLH1</fullName>
    </alternativeName>
    <alternativeName>
        <fullName>Probable WRKY transcription factor 52</fullName>
    </alternativeName>
    <alternativeName>
        <fullName evidence="12">Protein RPS4-homolog</fullName>
    </alternativeName>
    <alternativeName>
        <fullName>Protein SENSITIVE TO LOW HUMIDITY 1</fullName>
    </alternativeName>
    <alternativeName>
        <fullName evidence="15">Resistance to Colletotrichum higginsianum 2 protein</fullName>
    </alternativeName>
    <alternativeName>
        <fullName evidence="13">Resistance to Ralstonia solanacearum 1 protein</fullName>
    </alternativeName>
    <alternativeName>
        <fullName>WRKY DNA-binding protein 52</fullName>
    </alternativeName>
</protein>
<dbReference type="EMBL" id="AX103684">
    <property type="status" value="NOT_ANNOTATED_CDS"/>
    <property type="molecule type" value="Genomic_DNA"/>
</dbReference>
<dbReference type="EMBL" id="AB020744">
    <property type="protein sequence ID" value="BAB10247.1"/>
    <property type="status" value="ALT_SEQ"/>
    <property type="molecule type" value="Genomic_DNA"/>
</dbReference>
<dbReference type="EMBL" id="AB020744">
    <property type="protein sequence ID" value="BAB10248.1"/>
    <property type="status" value="ALT_SEQ"/>
    <property type="molecule type" value="Genomic_DNA"/>
</dbReference>
<dbReference type="EMBL" id="CP002688">
    <property type="protein sequence ID" value="AED95222.1"/>
    <property type="molecule type" value="Genomic_DNA"/>
</dbReference>
<dbReference type="EMBL" id="CP002688">
    <property type="protein sequence ID" value="AED95223.1"/>
    <property type="molecule type" value="Genomic_DNA"/>
</dbReference>
<dbReference type="EMBL" id="CP002688">
    <property type="protein sequence ID" value="ANM68859.1"/>
    <property type="molecule type" value="Genomic_DNA"/>
</dbReference>
<dbReference type="EMBL" id="AK117156">
    <property type="protein sequence ID" value="BAC41834.1"/>
    <property type="molecule type" value="mRNA"/>
</dbReference>
<dbReference type="EMBL" id="AK226456">
    <property type="protein sequence ID" value="BAE98598.1"/>
    <property type="molecule type" value="mRNA"/>
</dbReference>
<dbReference type="RefSeq" id="NP_001078715.1">
    <molecule id="P0DKH5-2"/>
    <property type="nucleotide sequence ID" value="NM_001085246.2"/>
</dbReference>
<dbReference type="RefSeq" id="NP_001318742.1">
    <molecule id="P0DKH5-2"/>
    <property type="nucleotide sequence ID" value="NM_001344604.1"/>
</dbReference>
<dbReference type="RefSeq" id="NP_199339.2">
    <molecule id="P0DKH5-1"/>
    <property type="nucleotide sequence ID" value="NM_123894.4"/>
</dbReference>
<dbReference type="PDB" id="4C6S">
    <property type="method" value="X-ray"/>
    <property type="resolution" value="1.75 A"/>
    <property type="chains" value="A=7-153"/>
</dbReference>
<dbReference type="PDB" id="4C6T">
    <property type="method" value="X-ray"/>
    <property type="resolution" value="2.65 A"/>
    <property type="chains" value="A/C=6-153"/>
</dbReference>
<dbReference type="PDBsum" id="4C6S"/>
<dbReference type="PDBsum" id="4C6T"/>
<dbReference type="SMR" id="P0DKH5"/>
<dbReference type="BioGRID" id="19811">
    <property type="interactions" value="2"/>
</dbReference>
<dbReference type="DIP" id="DIP-61676N"/>
<dbReference type="FunCoup" id="P0DKH5">
    <property type="interactions" value="210"/>
</dbReference>
<dbReference type="IntAct" id="P0DKH5">
    <property type="interactions" value="4"/>
</dbReference>
<dbReference type="STRING" id="3702.P0DKH5"/>
<dbReference type="PaxDb" id="3702-AT5G45260.1"/>
<dbReference type="EnsemblPlants" id="AT5G45260.1">
    <molecule id="P0DKH5-1"/>
    <property type="protein sequence ID" value="AT5G45260.1"/>
    <property type="gene ID" value="AT5G45260"/>
</dbReference>
<dbReference type="EnsemblPlants" id="AT5G45260.2">
    <molecule id="P0DKH5-2"/>
    <property type="protein sequence ID" value="AT5G45260.2"/>
    <property type="gene ID" value="AT5G45260"/>
</dbReference>
<dbReference type="EnsemblPlants" id="AT5G45260.3">
    <molecule id="P0DKH5-2"/>
    <property type="protein sequence ID" value="AT5G45260.3"/>
    <property type="gene ID" value="AT5G45260"/>
</dbReference>
<dbReference type="GeneID" id="834562"/>
<dbReference type="Gramene" id="AT5G45260.1">
    <molecule id="P0DKH5-1"/>
    <property type="protein sequence ID" value="AT5G45260.1"/>
    <property type="gene ID" value="AT5G45260"/>
</dbReference>
<dbReference type="Gramene" id="AT5G45260.2">
    <molecule id="P0DKH5-2"/>
    <property type="protein sequence ID" value="AT5G45260.2"/>
    <property type="gene ID" value="AT5G45260"/>
</dbReference>
<dbReference type="Gramene" id="AT5G45260.3">
    <molecule id="P0DKH5-2"/>
    <property type="protein sequence ID" value="AT5G45260.3"/>
    <property type="gene ID" value="AT5G45260"/>
</dbReference>
<dbReference type="KEGG" id="ath:AT5G45260"/>
<dbReference type="Araport" id="AT5G45260"/>
<dbReference type="TAIR" id="AT5G45260">
    <property type="gene designation" value="RRS1"/>
</dbReference>
<dbReference type="InParanoid" id="P0DKH5"/>
<dbReference type="OMA" id="KHIPREY"/>
<dbReference type="PhylomeDB" id="P0DKH5"/>
<dbReference type="EvolutionaryTrace" id="P0DKH5"/>
<dbReference type="PRO" id="PR:P0DKH5"/>
<dbReference type="Proteomes" id="UP000006548">
    <property type="component" value="Chromosome 5"/>
</dbReference>
<dbReference type="ExpressionAtlas" id="P0DKH5">
    <property type="expression patterns" value="baseline and differential"/>
</dbReference>
<dbReference type="GO" id="GO:0005737">
    <property type="term" value="C:cytoplasm"/>
    <property type="evidence" value="ECO:0007669"/>
    <property type="project" value="UniProtKB-SubCell"/>
</dbReference>
<dbReference type="GO" id="GO:0005634">
    <property type="term" value="C:nucleus"/>
    <property type="evidence" value="ECO:0007669"/>
    <property type="project" value="UniProtKB-SubCell"/>
</dbReference>
<dbReference type="GO" id="GO:0043531">
    <property type="term" value="F:ADP binding"/>
    <property type="evidence" value="ECO:0007669"/>
    <property type="project" value="InterPro"/>
</dbReference>
<dbReference type="GO" id="GO:0005524">
    <property type="term" value="F:ATP binding"/>
    <property type="evidence" value="ECO:0007669"/>
    <property type="project" value="UniProtKB-KW"/>
</dbReference>
<dbReference type="GO" id="GO:0003700">
    <property type="term" value="F:DNA-binding transcription factor activity"/>
    <property type="evidence" value="ECO:0007669"/>
    <property type="project" value="InterPro"/>
</dbReference>
<dbReference type="GO" id="GO:0042802">
    <property type="term" value="F:identical protein binding"/>
    <property type="evidence" value="ECO:0000353"/>
    <property type="project" value="IntAct"/>
</dbReference>
<dbReference type="GO" id="GO:0043565">
    <property type="term" value="F:sequence-specific DNA binding"/>
    <property type="evidence" value="ECO:0007669"/>
    <property type="project" value="InterPro"/>
</dbReference>
<dbReference type="GO" id="GO:0006952">
    <property type="term" value="P:defense response"/>
    <property type="evidence" value="ECO:0007669"/>
    <property type="project" value="UniProtKB-KW"/>
</dbReference>
<dbReference type="GO" id="GO:0007165">
    <property type="term" value="P:signal transduction"/>
    <property type="evidence" value="ECO:0007669"/>
    <property type="project" value="InterPro"/>
</dbReference>
<dbReference type="FunFam" id="1.10.8.430:FF:000004">
    <property type="entry name" value="Disease resistance protein (TIR-NBS-LRR class)"/>
    <property type="match status" value="1"/>
</dbReference>
<dbReference type="FunFam" id="3.40.50.10140:FF:000025">
    <property type="entry name" value="Disease resistance protein (TIR-NBS-LRR class)"/>
    <property type="match status" value="1"/>
</dbReference>
<dbReference type="FunFam" id="3.40.50.300:FF:001957">
    <property type="entry name" value="Disease resistance protein (TIR-NBS-LRR class)"/>
    <property type="match status" value="1"/>
</dbReference>
<dbReference type="FunFam" id="3.80.10.10:FF:001177">
    <property type="entry name" value="Disease resistance protein RRS1"/>
    <property type="match status" value="1"/>
</dbReference>
<dbReference type="Gene3D" id="1.10.8.430">
    <property type="entry name" value="Helical domain of apoptotic protease-activating factors"/>
    <property type="match status" value="1"/>
</dbReference>
<dbReference type="Gene3D" id="3.40.50.300">
    <property type="entry name" value="P-loop containing nucleotide triphosphate hydrolases"/>
    <property type="match status" value="1"/>
</dbReference>
<dbReference type="Gene3D" id="3.80.10.10">
    <property type="entry name" value="Ribonuclease Inhibitor"/>
    <property type="match status" value="2"/>
</dbReference>
<dbReference type="Gene3D" id="3.40.50.10140">
    <property type="entry name" value="Toll/interleukin-1 receptor homology (TIR) domain"/>
    <property type="match status" value="1"/>
</dbReference>
<dbReference type="Gene3D" id="2.20.25.80">
    <property type="entry name" value="WRKY domain"/>
    <property type="match status" value="1"/>
</dbReference>
<dbReference type="InterPro" id="IPR042197">
    <property type="entry name" value="Apaf_helical"/>
</dbReference>
<dbReference type="InterPro" id="IPR044974">
    <property type="entry name" value="Disease_R_plants"/>
</dbReference>
<dbReference type="InterPro" id="IPR011713">
    <property type="entry name" value="Leu-rich_rpt_3"/>
</dbReference>
<dbReference type="InterPro" id="IPR032675">
    <property type="entry name" value="LRR_dom_sf"/>
</dbReference>
<dbReference type="InterPro" id="IPR002182">
    <property type="entry name" value="NB-ARC"/>
</dbReference>
<dbReference type="InterPro" id="IPR027417">
    <property type="entry name" value="P-loop_NTPase"/>
</dbReference>
<dbReference type="InterPro" id="IPR000157">
    <property type="entry name" value="TIR_dom"/>
</dbReference>
<dbReference type="InterPro" id="IPR035897">
    <property type="entry name" value="Toll_tir_struct_dom_sf"/>
</dbReference>
<dbReference type="InterPro" id="IPR036390">
    <property type="entry name" value="WH_DNA-bd_sf"/>
</dbReference>
<dbReference type="InterPro" id="IPR003657">
    <property type="entry name" value="WRKY_dom"/>
</dbReference>
<dbReference type="InterPro" id="IPR036576">
    <property type="entry name" value="WRKY_dom_sf"/>
</dbReference>
<dbReference type="PANTHER" id="PTHR11017:SF569">
    <property type="entry name" value="DISEASE RESISTANCE PROTEIN"/>
    <property type="match status" value="1"/>
</dbReference>
<dbReference type="PANTHER" id="PTHR11017">
    <property type="entry name" value="LEUCINE-RICH REPEAT-CONTAINING PROTEIN"/>
    <property type="match status" value="1"/>
</dbReference>
<dbReference type="Pfam" id="PF07725">
    <property type="entry name" value="LRR_3"/>
    <property type="match status" value="1"/>
</dbReference>
<dbReference type="Pfam" id="PF00931">
    <property type="entry name" value="NB-ARC"/>
    <property type="match status" value="1"/>
</dbReference>
<dbReference type="Pfam" id="PF23282">
    <property type="entry name" value="WHD_ROQ1"/>
    <property type="match status" value="2"/>
</dbReference>
<dbReference type="Pfam" id="PF03106">
    <property type="entry name" value="WRKY"/>
    <property type="match status" value="1"/>
</dbReference>
<dbReference type="PRINTS" id="PR00364">
    <property type="entry name" value="DISEASERSIST"/>
</dbReference>
<dbReference type="SMART" id="SM00774">
    <property type="entry name" value="WRKY"/>
    <property type="match status" value="1"/>
</dbReference>
<dbReference type="SUPFAM" id="SSF52058">
    <property type="entry name" value="L domain-like"/>
    <property type="match status" value="1"/>
</dbReference>
<dbReference type="SUPFAM" id="SSF52540">
    <property type="entry name" value="P-loop containing nucleoside triphosphate hydrolases"/>
    <property type="match status" value="1"/>
</dbReference>
<dbReference type="SUPFAM" id="SSF52200">
    <property type="entry name" value="Toll/Interleukin receptor TIR domain"/>
    <property type="match status" value="1"/>
</dbReference>
<dbReference type="SUPFAM" id="SSF46785">
    <property type="entry name" value="Winged helix' DNA-binding domain"/>
    <property type="match status" value="1"/>
</dbReference>
<dbReference type="SUPFAM" id="SSF118290">
    <property type="entry name" value="WRKY DNA-binding domain"/>
    <property type="match status" value="1"/>
</dbReference>
<dbReference type="PROSITE" id="PS50104">
    <property type="entry name" value="TIR"/>
    <property type="match status" value="1"/>
</dbReference>
<dbReference type="PROSITE" id="PS50811">
    <property type="entry name" value="WRKY"/>
    <property type="match status" value="1"/>
</dbReference>
<feature type="chain" id="PRO_0000133693" description="Disease resistance protein RRS1">
    <location>
        <begin position="1"/>
        <end position="1288"/>
    </location>
</feature>
<feature type="domain" description="TIR" evidence="2">
    <location>
        <begin position="5"/>
        <end position="146"/>
    </location>
</feature>
<feature type="domain" description="NB-ARC" evidence="1">
    <location>
        <begin position="170"/>
        <end position="421"/>
    </location>
</feature>
<feature type="repeat" description="LRR 1" evidence="1">
    <location>
        <begin position="498"/>
        <end position="522"/>
    </location>
</feature>
<feature type="repeat" description="LRR 2" evidence="1">
    <location>
        <begin position="535"/>
        <end position="553"/>
    </location>
</feature>
<feature type="repeat" description="LRR 3" evidence="1">
    <location>
        <begin position="554"/>
        <end position="575"/>
    </location>
</feature>
<feature type="repeat" description="LRR 4" evidence="1">
    <location>
        <begin position="577"/>
        <end position="598"/>
    </location>
</feature>
<feature type="repeat" description="LRR 5" evidence="1">
    <location>
        <begin position="621"/>
        <end position="646"/>
    </location>
</feature>
<feature type="repeat" description="LRR 6" evidence="1">
    <location>
        <begin position="665"/>
        <end position="688"/>
    </location>
</feature>
<feature type="repeat" description="LRR 7" evidence="1">
    <location>
        <begin position="697"/>
        <end position="720"/>
    </location>
</feature>
<feature type="repeat" description="LRR 8" evidence="1">
    <location>
        <begin position="740"/>
        <end position="764"/>
    </location>
</feature>
<feature type="repeat" description="LRR 9" evidence="1">
    <location>
        <begin position="766"/>
        <end position="791"/>
    </location>
</feature>
<feature type="repeat" description="LRR 10" evidence="1">
    <location>
        <begin position="792"/>
        <end position="807"/>
    </location>
</feature>
<feature type="repeat" description="LRR 11" evidence="1">
    <location>
        <begin position="808"/>
        <end position="829"/>
    </location>
</feature>
<feature type="repeat" description="LRR 12" evidence="1">
    <location>
        <begin position="830"/>
        <end position="852"/>
    </location>
</feature>
<feature type="DNA-binding region" description="WRKY" evidence="3">
    <location>
        <begin position="1202"/>
        <end position="1270"/>
    </location>
</feature>
<feature type="region of interest" description="Important for interaction with RPS4" evidence="11">
    <location>
        <begin position="25"/>
        <end position="26"/>
    </location>
</feature>
<feature type="region of interest" description="Disordered" evidence="5">
    <location>
        <begin position="1267"/>
        <end position="1288"/>
    </location>
</feature>
<feature type="short sequence motif" description="Nuclear localization signal" evidence="4">
    <location>
        <begin position="986"/>
        <end position="1003"/>
    </location>
</feature>
<feature type="compositionally biased region" description="Polar residues" evidence="5">
    <location>
        <begin position="1279"/>
        <end position="1288"/>
    </location>
</feature>
<feature type="binding site" evidence="1">
    <location>
        <begin position="179"/>
        <end position="186"/>
    </location>
    <ligand>
        <name>ATP</name>
        <dbReference type="ChEBI" id="CHEBI:30616"/>
    </ligand>
</feature>
<feature type="splice variant" id="VSP_015696" description="In isoform 2." evidence="14">
    <location>
        <begin position="1188"/>
        <end position="1288"/>
    </location>
</feature>
<feature type="mutagenesis site" description="No effect on TIR domain homodimerization. Loss of TIR domain heterodimerization; when associated with A-33 in RPS4." evidence="11">
    <original>S</original>
    <variation>A</variation>
    <location>
        <position position="25"/>
    </location>
</feature>
<feature type="mutagenesis site" description="No effect on TIR domain homodimerization. Loss of TIR domain heterodimerization with RPS4." evidence="11">
    <original>H</original>
    <variation>A</variation>
    <location>
        <position position="26"/>
    </location>
</feature>
<feature type="mutagenesis site" description="No effect on pathogen effectors triggered cell death." evidence="11">
    <original>K</original>
    <variation>A</variation>
    <location>
        <position position="185"/>
    </location>
</feature>
<feature type="sequence conflict" description="In Ref. 4; BAC41834." evidence="16" ref="4">
    <original>L</original>
    <variation>S</variation>
    <location>
        <position position="395"/>
    </location>
</feature>
<feature type="strand" evidence="18">
    <location>
        <begin position="11"/>
        <end position="15"/>
    </location>
</feature>
<feature type="helix" evidence="18">
    <location>
        <begin position="17"/>
        <end position="20"/>
    </location>
</feature>
<feature type="helix" evidence="18">
    <location>
        <begin position="23"/>
        <end position="33"/>
    </location>
</feature>
<feature type="strand" evidence="18">
    <location>
        <begin position="38"/>
        <end position="42"/>
    </location>
</feature>
<feature type="helix" evidence="18">
    <location>
        <begin position="47"/>
        <end position="51"/>
    </location>
</feature>
<feature type="helix" evidence="18">
    <location>
        <begin position="54"/>
        <end position="59"/>
    </location>
</feature>
<feature type="strand" evidence="18">
    <location>
        <begin position="61"/>
        <end position="68"/>
    </location>
</feature>
<feature type="helix" evidence="18">
    <location>
        <begin position="73"/>
        <end position="75"/>
    </location>
</feature>
<feature type="helix" evidence="18">
    <location>
        <begin position="77"/>
        <end position="80"/>
    </location>
</feature>
<feature type="helix" evidence="18">
    <location>
        <begin position="82"/>
        <end position="85"/>
    </location>
</feature>
<feature type="helix" evidence="18">
    <location>
        <begin position="86"/>
        <end position="90"/>
    </location>
</feature>
<feature type="strand" evidence="18">
    <location>
        <begin position="95"/>
        <end position="101"/>
    </location>
</feature>
<feature type="helix" evidence="18">
    <location>
        <begin position="107"/>
        <end position="116"/>
    </location>
</feature>
<feature type="strand" evidence="18">
    <location>
        <begin position="122"/>
        <end position="124"/>
    </location>
</feature>
<feature type="helix" evidence="18">
    <location>
        <begin position="131"/>
        <end position="146"/>
    </location>
</feature>
<comment type="function">
    <text evidence="6 7 9 10 11 16">Transcription factor. Interacts specifically with the W box (5'-(T)TGAC[CT]-3'), a frequently occurring elicitor-responsive cis-acting element. Also acts as a disease resistance protein involved in resistance to fungal and bacterial pathogens, including R.solanacearum, P.syringae pv. tomato and C.higginsianum. Heterodimerization with RPS4 is required to form a functional complex to recognize AvrRps4 and PopP2 (PubMed:24744375). Contributes to temperature-conditioned RPS4 auto-immunity (PubMed:24146667).</text>
</comment>
<comment type="subunit">
    <text evidence="8 11">Interacts with PopP2, a R.solanacearum type III effector (PubMed:12788974). Interacts with RPS4 (PubMed:24744375).</text>
</comment>
<comment type="interaction">
    <interactant intactId="EBI-15211292">
        <id>P0DKH5</id>
    </interactant>
    <interactant intactId="EBI-16102886">
        <id>Q9XGM3</id>
        <label>RPS4</label>
    </interactant>
    <organismsDiffer>false</organismsDiffer>
    <experiments>18</experiments>
</comment>
<comment type="interaction">
    <interactant intactId="EBI-15211292">
        <id>P0DKH5</id>
    </interactant>
    <interactant intactId="EBI-15211292">
        <id>P0DKH5</id>
        <label>RRS1</label>
    </interactant>
    <organismsDiffer>false</organismsDiffer>
    <experiments>5</experiments>
</comment>
<comment type="interaction">
    <interactant intactId="EBI-15211292">
        <id>P0DKH5</id>
    </interactant>
    <interactant intactId="EBI-16103048">
        <id>Q52432</id>
        <label>avrRps4</label>
    </interactant>
    <organismsDiffer>true</organismsDiffer>
    <experiments>4</experiments>
</comment>
<comment type="interaction">
    <interactant intactId="EBI-15211292">
        <id>P0DKH5</id>
    </interactant>
    <interactant intactId="EBI-16103222">
        <id>Q8Y125</id>
        <label>popP2</label>
    </interactant>
    <organismsDiffer>true</organismsDiffer>
    <experiments>4</experiments>
</comment>
<comment type="subcellular location">
    <subcellularLocation>
        <location evidence="8">Nucleus</location>
    </subcellularLocation>
    <subcellularLocation>
        <location evidence="17">Cytoplasm</location>
    </subcellularLocation>
    <text evidence="8">The nuclear localization is only detected upon interaction with PopP2.</text>
</comment>
<comment type="alternative products">
    <event type="alternative splicing"/>
    <isoform>
        <id>P0DKH5-1</id>
        <name>1</name>
        <sequence type="displayed"/>
    </isoform>
    <isoform>
        <id>P0DKH5-2</id>
        <name>2</name>
        <sequence type="described" ref="VSP_015696"/>
    </isoform>
</comment>
<comment type="domain">
    <text evidence="11">The TIR does not cause cell death, but can suppress RPS4 TIR domain-induced cell death (PubMed:24744375). The TIR domain is involved in homo- and heterodimerization, but other domains also contribute to the interaction (PubMed:24744375).</text>
</comment>
<comment type="miscellaneous">
    <text evidence="9">Ecotypes susceptible to C.higginsianum or R.solanacearum, such as cv. Columbia, contain a protein with a premature stop codon, while the longer allele found in cv. Nd-1, cv. Wassilewskija or cv. RLD confers resistance.</text>
</comment>
<comment type="miscellaneous">
    <molecule>Isoform 2</molecule>
    <text evidence="16">May be due to intron retention.</text>
</comment>
<comment type="similarity">
    <text evidence="16">Belongs to the disease resistance TIR-NB-LRR family.</text>
</comment>
<comment type="sequence caution" evidence="16">
    <conflict type="erroneous gene model prediction">
        <sequence resource="EMBL-CDS" id="BAB10247"/>
    </conflict>
    <text>Was originally thought to correspond to two different genes At5g45260 and At5g45270.</text>
</comment>
<comment type="sequence caution" evidence="16">
    <conflict type="erroneous gene model prediction">
        <sequence resource="EMBL-CDS" id="BAB10248"/>
    </conflict>
    <text>Was originally thought to correspond to two different genes At5g45260 and At5g45270.</text>
</comment>
<comment type="online information" name="NIB-LRRS">
    <link uri="http://niblrrs.ucdavis.edu"/>
    <text>Functional and comparative genomics of disease resistance gene homologs</text>
</comment>
<reference key="1">
    <citation type="journal article" date="2002" name="Proc. Natl. Acad. Sci. U.S.A.">
        <title>Resistance to Ralstonia solanacearum in Arabidopsis thaliana is conferred by the recessive RRS1-R gene, a member of a novel family of resistance genes.</title>
        <authorList>
            <person name="Deslandes L."/>
            <person name="Olivier J."/>
            <person name="Theulieres F."/>
            <person name="Hirsch J."/>
            <person name="Feng D.X."/>
            <person name="Bittner-Eddy P."/>
            <person name="Beynon J."/>
            <person name="Marco Y."/>
        </authorList>
    </citation>
    <scope>NUCLEOTIDE SEQUENCE [GENOMIC DNA]</scope>
    <scope>FUNCTION</scope>
    <source>
        <strain>cv. Col-5</strain>
    </source>
</reference>
<reference key="2">
    <citation type="journal article" date="2000" name="DNA Res.">
        <title>Structural analysis of Arabidopsis thaliana chromosome 5. X. Sequence features of the regions of 3,076,755 bp covered by sixty P1 and TAC clones.</title>
        <authorList>
            <person name="Sato S."/>
            <person name="Nakamura Y."/>
            <person name="Kaneko T."/>
            <person name="Katoh T."/>
            <person name="Asamizu E."/>
            <person name="Kotani H."/>
            <person name="Tabata S."/>
        </authorList>
    </citation>
    <scope>NUCLEOTIDE SEQUENCE [LARGE SCALE GENOMIC DNA]</scope>
    <source>
        <strain>cv. Columbia</strain>
    </source>
</reference>
<reference key="3">
    <citation type="journal article" date="2017" name="Plant J.">
        <title>Araport11: a complete reannotation of the Arabidopsis thaliana reference genome.</title>
        <authorList>
            <person name="Cheng C.Y."/>
            <person name="Krishnakumar V."/>
            <person name="Chan A.P."/>
            <person name="Thibaud-Nissen F."/>
            <person name="Schobel S."/>
            <person name="Town C.D."/>
        </authorList>
    </citation>
    <scope>GENOME REANNOTATION</scope>
    <source>
        <strain>cv. Columbia</strain>
    </source>
</reference>
<reference key="4">
    <citation type="journal article" date="2002" name="Science">
        <title>Functional annotation of a full-length Arabidopsis cDNA collection.</title>
        <authorList>
            <person name="Seki M."/>
            <person name="Narusaka M."/>
            <person name="Kamiya A."/>
            <person name="Ishida J."/>
            <person name="Satou M."/>
            <person name="Sakurai T."/>
            <person name="Nakajima M."/>
            <person name="Enju A."/>
            <person name="Akiyama K."/>
            <person name="Oono Y."/>
            <person name="Muramatsu M."/>
            <person name="Hayashizaki Y."/>
            <person name="Kawai J."/>
            <person name="Carninci P."/>
            <person name="Itoh M."/>
            <person name="Ishii Y."/>
            <person name="Arakawa T."/>
            <person name="Shibata K."/>
            <person name="Shinagawa A."/>
            <person name="Shinozaki K."/>
        </authorList>
    </citation>
    <scope>NUCLEOTIDE SEQUENCE [LARGE SCALE MRNA] (ISOFORM 2)</scope>
    <source>
        <strain>cv. Columbia</strain>
    </source>
</reference>
<reference key="5">
    <citation type="submission" date="2006-07" db="EMBL/GenBank/DDBJ databases">
        <title>Large-scale analysis of RIKEN Arabidopsis full-length (RAFL) cDNAs.</title>
        <authorList>
            <person name="Totoki Y."/>
            <person name="Seki M."/>
            <person name="Ishida J."/>
            <person name="Nakajima M."/>
            <person name="Enju A."/>
            <person name="Kamiya A."/>
            <person name="Narusaka M."/>
            <person name="Shin-i T."/>
            <person name="Nakagawa M."/>
            <person name="Sakamoto N."/>
            <person name="Oishi K."/>
            <person name="Kohara Y."/>
            <person name="Kobayashi M."/>
            <person name="Toyoda A."/>
            <person name="Sakaki Y."/>
            <person name="Sakurai T."/>
            <person name="Iida K."/>
            <person name="Akiyama K."/>
            <person name="Satou M."/>
            <person name="Toyoda T."/>
            <person name="Konagaya A."/>
            <person name="Carninci P."/>
            <person name="Kawai J."/>
            <person name="Hayashizaki Y."/>
            <person name="Shinozaki K."/>
        </authorList>
    </citation>
    <scope>NUCLEOTIDE SEQUENCE [LARGE SCALE MRNA] (ISOFORM 1)</scope>
    <source>
        <strain>cv. Columbia</strain>
    </source>
</reference>
<reference key="6">
    <citation type="journal article" date="1999" name="Plant J.">
        <title>The Arabidopsis RPS4 bacterial-resistance gene is a member of the TIR-NBS-LRR family of disease-resistance genes.</title>
        <authorList>
            <person name="Gassmann W."/>
            <person name="Hinsch M.E."/>
            <person name="Staskawicz B.J."/>
        </authorList>
    </citation>
    <scope>FUNCTION</scope>
</reference>
<reference key="7">
    <citation type="journal article" date="2003" name="Proc. Natl. Acad. Sci. U.S.A.">
        <title>Physical interaction between RRS1-R, a protein conferring resistance to bacterial wilt, and PopP2, a type III effector targeted to the plant nucleus.</title>
        <authorList>
            <person name="Deslandes L."/>
            <person name="Olivier J."/>
            <person name="Peeters N."/>
            <person name="Feng D.X."/>
            <person name="Khounlotham M."/>
            <person name="Boucher C."/>
            <person name="Somssich I."/>
            <person name="Genin S."/>
            <person name="Marco Y."/>
        </authorList>
    </citation>
    <scope>INTERACTION WITH POPP2</scope>
    <scope>SUBCELLULAR LOCATION</scope>
    <source>
        <strain>cv. Col-5</strain>
        <strain>cv. Nd-1</strain>
    </source>
</reference>
<reference key="8">
    <citation type="journal article" date="2009" name="Plant J.">
        <title>RRS1 and RPS4 provide a dual Resistance-gene system against fungal and bacterial pathogens.</title>
        <authorList>
            <person name="Narusaka M."/>
            <person name="Shirasu K."/>
            <person name="Noutoshi Y."/>
            <person name="Kubo Y."/>
            <person name="Shiraishi T."/>
            <person name="Iwabuchi M."/>
            <person name="Narusaka Y."/>
        </authorList>
    </citation>
    <scope>FUNCTION</scope>
    <source>
        <strain>cv. Columbia</strain>
        <strain>cv. RLD</strain>
        <strain>cv. Wassilewskija</strain>
    </source>
</reference>
<reference key="9">
    <citation type="journal article" date="2013" name="Front. Plant Sci.">
        <title>Arabidopsis TNL-WRKY domain receptor RRS1 contributes to temperature-conditioned RPS4 auto-immunity.</title>
        <authorList>
            <person name="Heidrich K."/>
            <person name="Tsuda K."/>
            <person name="Blanvillain-Baufume S."/>
            <person name="Wirthmueller L."/>
            <person name="Bautor J."/>
            <person name="Parker J.E."/>
        </authorList>
    </citation>
    <scope>FUNCTION</scope>
    <source>
        <strain>cv. Columbia</strain>
        <strain>cv. Wassilewskija</strain>
    </source>
</reference>
<reference key="10">
    <citation type="journal article" date="2014" name="Front. Plant Sci.">
        <title>A novel conserved mechanism for plant NLR protein pairs: the 'integrated decoy' hypothesis.</title>
        <authorList>
            <person name="Cesari S."/>
            <person name="Bernoux M."/>
            <person name="Moncuquet P."/>
            <person name="Kroj T."/>
            <person name="Dodds P.N."/>
        </authorList>
    </citation>
    <scope>REVIEW</scope>
</reference>
<reference key="11">
    <citation type="journal article" date="2014" name="Science">
        <title>Structural basis for assembly and function of a heterodimeric plant immune receptor.</title>
        <authorList>
            <person name="Williams S.J."/>
            <person name="Sohn K.H."/>
            <person name="Wan L."/>
            <person name="Bernoux M."/>
            <person name="Sarris P.F."/>
            <person name="Segonzac C."/>
            <person name="Ve T."/>
            <person name="Ma Y."/>
            <person name="Saucet S.B."/>
            <person name="Ericsson D.J."/>
            <person name="Casey L.W."/>
            <person name="Lonhienne T."/>
            <person name="Winzor D.J."/>
            <person name="Zhang X."/>
            <person name="Coerdt A."/>
            <person name="Parker J.E."/>
            <person name="Dodds P.N."/>
            <person name="Kobe B."/>
            <person name="Jones J.D."/>
        </authorList>
    </citation>
    <scope>X-RAY CRYSTALLOGRAPHY (1.75 ANGSTROMS) OF 6-153 IN COMPLEX WITH RPS4</scope>
    <scope>DOMAIN</scope>
    <scope>FUNCTION</scope>
    <scope>MUTAGENESIS OF SER-25; HIS-26 AND LYS-185</scope>
    <source>
        <strain>cv. Columbia</strain>
    </source>
</reference>
<sequence>MTNCEKDEEFVCISCVEEVRYSFVSHLSEALRRKGINNVVVDVDIDDLLFKESQAKIEKAGVSVMVLPGNCDPSEVWLDKFAKVLECQRNNKDQAVVSVLYGDSLLRDQWLSELDFRGLSRIHQSRKECSDSILVEEIVRDVYETHFYVGRIGIYSKLLEIENMVNKQPIGIRCVGIWGMPGIGKTTLAKAVFDQMSSAFDASCFIEDYDKSIHEKGLYCLLEEQLLPGNDATIMKLSSLRDRLNSKRVLVVLDDVRNALVGESFLEGFDWLGPGSLIIITSRDKQVFCLCGINQIYEVQGLNEKEARQLFLLSASIKEDMGEQNLQELSVRVINYANGNPLAISVYGRELKGKKKLSEMETAFLKLKRRPPFKIVDAFKSTYDTLSDNEKNIFLDIACFFQGENVNYVIQLLEGCGFFPHVEIDVLVDKCLVTISENRVWLHKLTQDIGREIINGETVQIERRRRLWEPWSIKYLLEYNEHKANGEPKTTFKRAQGSEEIEGLFLDTSNLRFDLQPSAFKNMLNLRLLKIYCSNPEVHPVINFPTGSLHSLPNELRLLHWENYPLKSLPQNFDPRHLVEINMPYSQLQKLWGGTKNLEMLRTIRLCHSHHLVDIDDLLKAENLEVIDLQGCTRLQNFPAAGRLLRLRVVNLSGCIKIKSVLEIPPNIEKLHLQGTGILALPVSTVKPNHRELVNFLTEIPGLSEELERLTSLLESNSSCQDLGKLICLELKDCSCLQSLPNMANLDLNVLDLSGCSSLNSIQGFPRFLKQLYLGGTAIREVPQLPQSLEILNAHGSCLRSLPNMANLEFLKVLDLSGCSELETIQGFPRNLKELYFAGTTLREVPQLPLSLEVLNAHGSDSEKLPMHYKFNNFFDLSQQVVNDFLLKTLTYVKHIPRGYTQELINKAPTFSFSAPSHTNQNATFDLQSGSSVMTRLNHSWRNTLVGFGMLVEVAFPEDYCDATDVGISCVCRWSNKEGRSCRIERKFHCWAPWQVVPKVRKDHTFVFSDVNMRPSTGEGNDPDIWAGLVVFEFFPINQQTKCLNDRFTVRRCGVRVINVATGNTSLENIALVLSLDPVEVSGYEVLRVSYDDLQEMDKVLFLYIASLFNDEDVDFVAPLIAGIDLDVSSGLKVLADVSLISVSSNGEIVMHSLQRQMGKEILHGQSMLLSDCESSMTENLSDVPKKKKKHSESRVKKVVSIPAIDEGDLWTWRKYGQKDILGSRFPRGYYRCAYKFTHGCKATKQVQRSETDSNMLAITYLSEHNHPRPTKRKALADSTRSTSSSIC</sequence>
<proteinExistence type="evidence at protein level"/>
<accession>P0DKH5</accession>
<accession>Q0WWA0</accession>
<accession>Q689Y9</accession>
<accession>Q8GZ83</accession>
<accession>Q9FH83</accession>
<accession>Q9FH84</accession>
<evidence type="ECO:0000255" key="1"/>
<evidence type="ECO:0000255" key="2">
    <source>
        <dbReference type="PROSITE-ProRule" id="PRU00204"/>
    </source>
</evidence>
<evidence type="ECO:0000255" key="3">
    <source>
        <dbReference type="PROSITE-ProRule" id="PRU00223"/>
    </source>
</evidence>
<evidence type="ECO:0000255" key="4">
    <source>
        <dbReference type="PROSITE-ProRule" id="PRU00768"/>
    </source>
</evidence>
<evidence type="ECO:0000256" key="5">
    <source>
        <dbReference type="SAM" id="MobiDB-lite"/>
    </source>
</evidence>
<evidence type="ECO:0000269" key="6">
    <source>
    </source>
</evidence>
<evidence type="ECO:0000269" key="7">
    <source>
    </source>
</evidence>
<evidence type="ECO:0000269" key="8">
    <source>
    </source>
</evidence>
<evidence type="ECO:0000269" key="9">
    <source>
    </source>
</evidence>
<evidence type="ECO:0000269" key="10">
    <source>
    </source>
</evidence>
<evidence type="ECO:0000269" key="11">
    <source>
    </source>
</evidence>
<evidence type="ECO:0000303" key="12">
    <source>
    </source>
</evidence>
<evidence type="ECO:0000303" key="13">
    <source>
    </source>
</evidence>
<evidence type="ECO:0000303" key="14">
    <source>
    </source>
</evidence>
<evidence type="ECO:0000303" key="15">
    <source>
    </source>
</evidence>
<evidence type="ECO:0000305" key="16"/>
<evidence type="ECO:0000305" key="17">
    <source>
    </source>
</evidence>
<evidence type="ECO:0007829" key="18">
    <source>
        <dbReference type="PDB" id="4C6S"/>
    </source>
</evidence>
<name>WRK52_ARATH</name>